<comment type="function">
    <text evidence="1">Substrate-recognition component of the SCF (SKP1-CUL1-F-box protein)-type E3 ubiquitin ligase complex.</text>
</comment>
<comment type="subunit">
    <text evidence="1">Directly interacts with SKP1 and CUL1.</text>
</comment>
<organism>
    <name type="scientific">Homo sapiens</name>
    <name type="common">Human</name>
    <dbReference type="NCBI Taxonomy" id="9606"/>
    <lineage>
        <taxon>Eukaryota</taxon>
        <taxon>Metazoa</taxon>
        <taxon>Chordata</taxon>
        <taxon>Craniata</taxon>
        <taxon>Vertebrata</taxon>
        <taxon>Euteleostomi</taxon>
        <taxon>Mammalia</taxon>
        <taxon>Eutheria</taxon>
        <taxon>Euarchontoglires</taxon>
        <taxon>Primates</taxon>
        <taxon>Haplorrhini</taxon>
        <taxon>Catarrhini</taxon>
        <taxon>Hominidae</taxon>
        <taxon>Homo</taxon>
    </lineage>
</organism>
<accession>Q8TF61</accession>
<accession>G3V0Z7</accession>
<accession>Q2M1V8</accession>
<reference key="1">
    <citation type="journal article" date="2005" name="Nature">
        <title>Generation and annotation of the DNA sequences of human chromosomes 2 and 4.</title>
        <authorList>
            <person name="Hillier L.W."/>
            <person name="Graves T.A."/>
            <person name="Fulton R.S."/>
            <person name="Fulton L.A."/>
            <person name="Pepin K.H."/>
            <person name="Minx P."/>
            <person name="Wagner-McPherson C."/>
            <person name="Layman D."/>
            <person name="Wylie K."/>
            <person name="Sekhon M."/>
            <person name="Becker M.C."/>
            <person name="Fewell G.A."/>
            <person name="Delehaunty K.D."/>
            <person name="Miner T.L."/>
            <person name="Nash W.E."/>
            <person name="Kremitzki C."/>
            <person name="Oddy L."/>
            <person name="Du H."/>
            <person name="Sun H."/>
            <person name="Bradshaw-Cordum H."/>
            <person name="Ali J."/>
            <person name="Carter J."/>
            <person name="Cordes M."/>
            <person name="Harris A."/>
            <person name="Isak A."/>
            <person name="van Brunt A."/>
            <person name="Nguyen C."/>
            <person name="Du F."/>
            <person name="Courtney L."/>
            <person name="Kalicki J."/>
            <person name="Ozersky P."/>
            <person name="Abbott S."/>
            <person name="Armstrong J."/>
            <person name="Belter E.A."/>
            <person name="Caruso L."/>
            <person name="Cedroni M."/>
            <person name="Cotton M."/>
            <person name="Davidson T."/>
            <person name="Desai A."/>
            <person name="Elliott G."/>
            <person name="Erb T."/>
            <person name="Fronick C."/>
            <person name="Gaige T."/>
            <person name="Haakenson W."/>
            <person name="Haglund K."/>
            <person name="Holmes A."/>
            <person name="Harkins R."/>
            <person name="Kim K."/>
            <person name="Kruchowski S.S."/>
            <person name="Strong C.M."/>
            <person name="Grewal N."/>
            <person name="Goyea E."/>
            <person name="Hou S."/>
            <person name="Levy A."/>
            <person name="Martinka S."/>
            <person name="Mead K."/>
            <person name="McLellan M.D."/>
            <person name="Meyer R."/>
            <person name="Randall-Maher J."/>
            <person name="Tomlinson C."/>
            <person name="Dauphin-Kohlberg S."/>
            <person name="Kozlowicz-Reilly A."/>
            <person name="Shah N."/>
            <person name="Swearengen-Shahid S."/>
            <person name="Snider J."/>
            <person name="Strong J.T."/>
            <person name="Thompson J."/>
            <person name="Yoakum M."/>
            <person name="Leonard S."/>
            <person name="Pearman C."/>
            <person name="Trani L."/>
            <person name="Radionenko M."/>
            <person name="Waligorski J.E."/>
            <person name="Wang C."/>
            <person name="Rock S.M."/>
            <person name="Tin-Wollam A.-M."/>
            <person name="Maupin R."/>
            <person name="Latreille P."/>
            <person name="Wendl M.C."/>
            <person name="Yang S.-P."/>
            <person name="Pohl C."/>
            <person name="Wallis J.W."/>
            <person name="Spieth J."/>
            <person name="Bieri T.A."/>
            <person name="Berkowicz N."/>
            <person name="Nelson J.O."/>
            <person name="Osborne J."/>
            <person name="Ding L."/>
            <person name="Meyer R."/>
            <person name="Sabo A."/>
            <person name="Shotland Y."/>
            <person name="Sinha P."/>
            <person name="Wohldmann P.E."/>
            <person name="Cook L.L."/>
            <person name="Hickenbotham M.T."/>
            <person name="Eldred J."/>
            <person name="Williams D."/>
            <person name="Jones T.A."/>
            <person name="She X."/>
            <person name="Ciccarelli F.D."/>
            <person name="Izaurralde E."/>
            <person name="Taylor J."/>
            <person name="Schmutz J."/>
            <person name="Myers R.M."/>
            <person name="Cox D.R."/>
            <person name="Huang X."/>
            <person name="McPherson J.D."/>
            <person name="Mardis E.R."/>
            <person name="Clifton S.W."/>
            <person name="Warren W.C."/>
            <person name="Chinwalla A.T."/>
            <person name="Eddy S.R."/>
            <person name="Marra M.A."/>
            <person name="Ovcharenko I."/>
            <person name="Furey T.S."/>
            <person name="Miller W."/>
            <person name="Eichler E.E."/>
            <person name="Bork P."/>
            <person name="Suyama M."/>
            <person name="Torrents D."/>
            <person name="Waterston R.H."/>
            <person name="Wilson R.K."/>
        </authorList>
    </citation>
    <scope>NUCLEOTIDE SEQUENCE [LARGE SCALE GENOMIC DNA]</scope>
</reference>
<reference key="2">
    <citation type="submission" date="2005-09" db="EMBL/GenBank/DDBJ databases">
        <authorList>
            <person name="Mural R.J."/>
            <person name="Istrail S."/>
            <person name="Sutton G."/>
            <person name="Florea L."/>
            <person name="Halpern A.L."/>
            <person name="Mobarry C.M."/>
            <person name="Lippert R."/>
            <person name="Walenz B."/>
            <person name="Shatkay H."/>
            <person name="Dew I."/>
            <person name="Miller J.R."/>
            <person name="Flanigan M.J."/>
            <person name="Edwards N.J."/>
            <person name="Bolanos R."/>
            <person name="Fasulo D."/>
            <person name="Halldorsson B.V."/>
            <person name="Hannenhalli S."/>
            <person name="Turner R."/>
            <person name="Yooseph S."/>
            <person name="Lu F."/>
            <person name="Nusskern D.R."/>
            <person name="Shue B.C."/>
            <person name="Zheng X.H."/>
            <person name="Zhong F."/>
            <person name="Delcher A.L."/>
            <person name="Huson D.H."/>
            <person name="Kravitz S.A."/>
            <person name="Mouchard L."/>
            <person name="Reinert K."/>
            <person name="Remington K.A."/>
            <person name="Clark A.G."/>
            <person name="Waterman M.S."/>
            <person name="Eichler E.E."/>
            <person name="Adams M.D."/>
            <person name="Hunkapiller M.W."/>
            <person name="Myers E.W."/>
            <person name="Venter J.C."/>
        </authorList>
    </citation>
    <scope>NUCLEOTIDE SEQUENCE [LARGE SCALE GENOMIC DNA]</scope>
</reference>
<reference key="3">
    <citation type="journal article" date="2001" name="DNA Res.">
        <title>Prediction of the coding sequences of unidentified human genes. XXII. The complete sequences of 50 new cDNA clones which code for large proteins.</title>
        <authorList>
            <person name="Nagase T."/>
            <person name="Kikuno R."/>
            <person name="Ohara O."/>
        </authorList>
    </citation>
    <scope>NUCLEOTIDE SEQUENCE [LARGE SCALE MRNA] OF 55-875</scope>
    <source>
        <tissue>Brain</tissue>
    </source>
</reference>
<reference key="4">
    <citation type="journal article" date="2004" name="Genome Res.">
        <title>The status, quality, and expansion of the NIH full-length cDNA project: the Mammalian Gene Collection (MGC).</title>
        <authorList>
            <consortium name="The MGC Project Team"/>
        </authorList>
    </citation>
    <scope>NUCLEOTIDE SEQUENCE [LARGE SCALE MRNA] OF 365-875</scope>
</reference>
<protein>
    <recommendedName>
        <fullName>F-box only protein 41</fullName>
    </recommendedName>
</protein>
<feature type="chain" id="PRO_0000119940" description="F-box only protein 41">
    <location>
        <begin position="1"/>
        <end position="875"/>
    </location>
</feature>
<feature type="domain" description="F-box">
    <location>
        <begin position="496"/>
        <end position="540"/>
    </location>
</feature>
<feature type="region of interest" description="Disordered" evidence="4">
    <location>
        <begin position="85"/>
        <end position="110"/>
    </location>
</feature>
<feature type="region of interest" description="Disordered" evidence="4">
    <location>
        <begin position="165"/>
        <end position="194"/>
    </location>
</feature>
<feature type="region of interest" description="Disordered" evidence="4">
    <location>
        <begin position="347"/>
        <end position="542"/>
    </location>
</feature>
<feature type="coiled-coil region" evidence="3">
    <location>
        <begin position="209"/>
        <end position="351"/>
    </location>
</feature>
<feature type="compositionally biased region" description="Pro residues" evidence="4">
    <location>
        <begin position="170"/>
        <end position="182"/>
    </location>
</feature>
<feature type="compositionally biased region" description="Low complexity" evidence="4">
    <location>
        <begin position="183"/>
        <end position="194"/>
    </location>
</feature>
<feature type="compositionally biased region" description="Polar residues" evidence="4">
    <location>
        <begin position="347"/>
        <end position="356"/>
    </location>
</feature>
<feature type="compositionally biased region" description="Gly residues" evidence="4">
    <location>
        <begin position="359"/>
        <end position="368"/>
    </location>
</feature>
<feature type="compositionally biased region" description="Polar residues" evidence="4">
    <location>
        <begin position="395"/>
        <end position="416"/>
    </location>
</feature>
<feature type="modified residue" description="Omega-N-methylarginine" evidence="2">
    <location>
        <position position="360"/>
    </location>
</feature>
<feature type="modified residue" description="Phosphoserine" evidence="2">
    <location>
        <position position="478"/>
    </location>
</feature>
<feature type="modified residue" description="Phosphothreonine" evidence="2">
    <location>
        <position position="479"/>
    </location>
</feature>
<feature type="modified residue" description="Phosphoserine" evidence="2">
    <location>
        <position position="762"/>
    </location>
</feature>
<feature type="sequence conflict" description="In Ref. 3; BAB85526." evidence="5" ref="3">
    <original>S</original>
    <variation>T</variation>
    <location>
        <position position="454"/>
    </location>
</feature>
<keyword id="KW-0002">3D-structure</keyword>
<keyword id="KW-0175">Coiled coil</keyword>
<keyword id="KW-0488">Methylation</keyword>
<keyword id="KW-0597">Phosphoprotein</keyword>
<keyword id="KW-1267">Proteomics identification</keyword>
<keyword id="KW-1185">Reference proteome</keyword>
<keyword id="KW-0833">Ubl conjugation pathway</keyword>
<sequence>MASLDLPYRCPRCGEHKRFRSLSSLRAHLEYSHTYETLYILSKTNSICDGAAAAAAAAAAASGFPLAPEPAALLAVPGARREVFESTSFQGKEQAAGPSPAAPHLLHHHHHHAPLAHFPGDLVPASLPCEELAEPGLVPAAAARYALREIEIPLGELFARKSVASSACSTPPPGPGPGPCPGPASASPASPSPADVAYEEGLARLKIRALEKLEVDRRLERLSEEVEQKIAGQVGRLQAELERKAAELETARQESARLGREKEELEERASELSRQVDVSVELLASLKQDLVHKEQELSRKQQEVVQIDQFLKETAAREASAKLRLQQFIEELLERADRAERQLQVISSSCGSTPSASLGRGGGGGGAGPNARGPGRMREHHVGPAVPNTYAVSRHGSSPSTGASSRVPAASQSSGCYDSDSLELPRPEEGAPEDSGPGGLGTRAQAANGGSERSQPPRSSGLRRQAIQNWQRRPRRHSTEGEEGDVSDVGSRTTESEAEGPLDAPRPGPAMAGPLSSCRLSARPEGGSGRGRRAERVSPSRSNEVISPEILKMRAALFCIFTYLDTRTLLHAAEVCRDWRFVARHPAVWTRVLLENARVCSKFLAMLAQWCTQAHSLTLQNLKPRQRGKKESKEEYARSTRGCLEAGLESLLKAAGGNLLILRISHCPNILTDRSLWLASCYCRALQAVTYRSATDPVGHEVIWALGAGCREIVSLQVAPLHPCQQPTRFSNRCLQMIGRCWPHLRALGVGGAGCGVQGLASLARNCMRLQVLELDHVSEITQEVAAEVCREGLKGLEMLVLTATPVTPKALLHFNSICRNLKSIVVQIGIADYFKEPSSPEAQKLFEDMVTKLQALRRRPGFSKILHIKVEGGC</sequence>
<proteinExistence type="evidence at protein level"/>
<evidence type="ECO:0000250" key="1"/>
<evidence type="ECO:0000250" key="2">
    <source>
        <dbReference type="UniProtKB" id="Q6NS60"/>
    </source>
</evidence>
<evidence type="ECO:0000255" key="3"/>
<evidence type="ECO:0000256" key="4">
    <source>
        <dbReference type="SAM" id="MobiDB-lite"/>
    </source>
</evidence>
<evidence type="ECO:0000305" key="5"/>
<name>FBX41_HUMAN</name>
<dbReference type="EMBL" id="AC010913">
    <property type="status" value="NOT_ANNOTATED_CDS"/>
    <property type="molecule type" value="Genomic_DNA"/>
</dbReference>
<dbReference type="EMBL" id="CH471053">
    <property type="protein sequence ID" value="EAW99736.1"/>
    <property type="molecule type" value="Genomic_DNA"/>
</dbReference>
<dbReference type="EMBL" id="AB075820">
    <property type="protein sequence ID" value="BAB85526.1"/>
    <property type="molecule type" value="mRNA"/>
</dbReference>
<dbReference type="EMBL" id="BC112202">
    <property type="protein sequence ID" value="AAI12203.1"/>
    <property type="molecule type" value="mRNA"/>
</dbReference>
<dbReference type="CCDS" id="CCDS46337.2"/>
<dbReference type="RefSeq" id="NP_001073879.2">
    <property type="nucleotide sequence ID" value="NM_001080410.4"/>
</dbReference>
<dbReference type="RefSeq" id="NP_001358318.1">
    <property type="nucleotide sequence ID" value="NM_001371389.2"/>
</dbReference>
<dbReference type="RefSeq" id="XP_006712013.1">
    <property type="nucleotide sequence ID" value="XM_006711950.2"/>
</dbReference>
<dbReference type="RefSeq" id="XP_011530864.1">
    <property type="nucleotide sequence ID" value="XM_011532562.1"/>
</dbReference>
<dbReference type="RefSeq" id="XP_016858910.1">
    <property type="nucleotide sequence ID" value="XM_017003421.1"/>
</dbReference>
<dbReference type="RefSeq" id="XP_016858911.1">
    <property type="nucleotide sequence ID" value="XM_017003422.1"/>
</dbReference>
<dbReference type="RefSeq" id="XP_016858912.1">
    <property type="nucleotide sequence ID" value="XM_017003423.1"/>
</dbReference>
<dbReference type="RefSeq" id="XP_047299414.1">
    <property type="nucleotide sequence ID" value="XM_047443458.1"/>
</dbReference>
<dbReference type="RefSeq" id="XP_047299415.1">
    <property type="nucleotide sequence ID" value="XM_047443459.1"/>
</dbReference>
<dbReference type="RefSeq" id="XP_047299416.1">
    <property type="nucleotide sequence ID" value="XM_047443460.1"/>
</dbReference>
<dbReference type="RefSeq" id="XP_054196660.1">
    <property type="nucleotide sequence ID" value="XM_054340685.1"/>
</dbReference>
<dbReference type="RefSeq" id="XP_054196661.1">
    <property type="nucleotide sequence ID" value="XM_054340686.1"/>
</dbReference>
<dbReference type="RefSeq" id="XP_054196662.1">
    <property type="nucleotide sequence ID" value="XM_054340687.1"/>
</dbReference>
<dbReference type="RefSeq" id="XP_054196663.1">
    <property type="nucleotide sequence ID" value="XM_054340688.1"/>
</dbReference>
<dbReference type="PDB" id="8S1R">
    <property type="method" value="X-ray"/>
    <property type="resolution" value="1.98 A"/>
    <property type="chains" value="EaE/FaF/GaG/HaH=85-91"/>
</dbReference>
<dbReference type="PDBsum" id="8S1R"/>
<dbReference type="SMR" id="Q8TF61"/>
<dbReference type="BioGRID" id="127320">
    <property type="interactions" value="4"/>
</dbReference>
<dbReference type="ComplexPortal" id="CPX-7982">
    <property type="entry name" value="SCF E3 ubiquitin ligase complex, FBXO41 variant"/>
</dbReference>
<dbReference type="FunCoup" id="Q8TF61">
    <property type="interactions" value="588"/>
</dbReference>
<dbReference type="IntAct" id="Q8TF61">
    <property type="interactions" value="4"/>
</dbReference>
<dbReference type="STRING" id="9606.ENSP00000428646"/>
<dbReference type="DrugBank" id="DB12695">
    <property type="generic name" value="Phenethyl Isothiocyanate"/>
</dbReference>
<dbReference type="GlyGen" id="Q8TF61">
    <property type="glycosylation" value="1 site"/>
</dbReference>
<dbReference type="iPTMnet" id="Q8TF61"/>
<dbReference type="PhosphoSitePlus" id="Q8TF61"/>
<dbReference type="SwissPalm" id="Q8TF61"/>
<dbReference type="BioMuta" id="FBXO41"/>
<dbReference type="DMDM" id="387912926"/>
<dbReference type="jPOST" id="Q8TF61"/>
<dbReference type="MassIVE" id="Q8TF61"/>
<dbReference type="PaxDb" id="9606-ENSP00000428646"/>
<dbReference type="PeptideAtlas" id="Q8TF61"/>
<dbReference type="ProteomicsDB" id="74561"/>
<dbReference type="Antibodypedia" id="65168">
    <property type="antibodies" value="58 antibodies from 19 providers"/>
</dbReference>
<dbReference type="DNASU" id="150726"/>
<dbReference type="Ensembl" id="ENST00000295133.9">
    <property type="protein sequence ID" value="ENSP00000295133.6"/>
    <property type="gene ID" value="ENSG00000163013.12"/>
</dbReference>
<dbReference type="Ensembl" id="ENST00000520530.3">
    <property type="protein sequence ID" value="ENSP00000430968.2"/>
    <property type="gene ID" value="ENSG00000163013.12"/>
</dbReference>
<dbReference type="Ensembl" id="ENST00000521871.5">
    <property type="protein sequence ID" value="ENSP00000428646.1"/>
    <property type="gene ID" value="ENSG00000163013.12"/>
</dbReference>
<dbReference type="GeneID" id="150726"/>
<dbReference type="KEGG" id="hsa:150726"/>
<dbReference type="MANE-Select" id="ENST00000520530.3">
    <property type="protein sequence ID" value="ENSP00000430968.2"/>
    <property type="RefSeq nucleotide sequence ID" value="NM_001371389.2"/>
    <property type="RefSeq protein sequence ID" value="NP_001358318.1"/>
</dbReference>
<dbReference type="UCSC" id="uc021vjh.2">
    <property type="organism name" value="human"/>
</dbReference>
<dbReference type="AGR" id="HGNC:29409"/>
<dbReference type="CTD" id="150726"/>
<dbReference type="DisGeNET" id="150726"/>
<dbReference type="GeneCards" id="FBXO41"/>
<dbReference type="HGNC" id="HGNC:29409">
    <property type="gene designation" value="FBXO41"/>
</dbReference>
<dbReference type="HPA" id="ENSG00000163013">
    <property type="expression patterns" value="Tissue enriched (brain)"/>
</dbReference>
<dbReference type="MIM" id="609108">
    <property type="type" value="gene"/>
</dbReference>
<dbReference type="neXtProt" id="NX_Q8TF61"/>
<dbReference type="OpenTargets" id="ENSG00000163013"/>
<dbReference type="PharmGKB" id="PA134946052"/>
<dbReference type="VEuPathDB" id="HostDB:ENSG00000163013"/>
<dbReference type="eggNOG" id="KOG4341">
    <property type="taxonomic scope" value="Eukaryota"/>
</dbReference>
<dbReference type="GeneTree" id="ENSGT00530000063713"/>
<dbReference type="HOGENOM" id="CLU_018140_0_0_1"/>
<dbReference type="InParanoid" id="Q8TF61"/>
<dbReference type="OMA" id="CGTTPNC"/>
<dbReference type="OrthoDB" id="6482165at2759"/>
<dbReference type="PAN-GO" id="Q8TF61">
    <property type="GO annotations" value="0 GO annotations based on evolutionary models"/>
</dbReference>
<dbReference type="TreeFam" id="TF329439"/>
<dbReference type="PathwayCommons" id="Q8TF61"/>
<dbReference type="Reactome" id="R-HSA-8951664">
    <property type="pathway name" value="Neddylation"/>
</dbReference>
<dbReference type="Reactome" id="R-HSA-983168">
    <property type="pathway name" value="Antigen processing: Ubiquitination &amp; Proteasome degradation"/>
</dbReference>
<dbReference type="SignaLink" id="Q8TF61"/>
<dbReference type="BioGRID-ORCS" id="150726">
    <property type="hits" value="39 hits in 1197 CRISPR screens"/>
</dbReference>
<dbReference type="CD-CODE" id="FB4E32DD">
    <property type="entry name" value="Presynaptic clusters and postsynaptic densities"/>
</dbReference>
<dbReference type="ChiTaRS" id="FBXO41">
    <property type="organism name" value="human"/>
</dbReference>
<dbReference type="GenomeRNAi" id="150726"/>
<dbReference type="Pharos" id="Q8TF61">
    <property type="development level" value="Tbio"/>
</dbReference>
<dbReference type="PRO" id="PR:Q8TF61"/>
<dbReference type="Proteomes" id="UP000005640">
    <property type="component" value="Chromosome 2"/>
</dbReference>
<dbReference type="RNAct" id="Q8TF61">
    <property type="molecule type" value="protein"/>
</dbReference>
<dbReference type="Bgee" id="ENSG00000163013">
    <property type="expression patterns" value="Expressed in CA1 field of hippocampus and 166 other cell types or tissues"/>
</dbReference>
<dbReference type="GO" id="GO:0005829">
    <property type="term" value="C:cytosol"/>
    <property type="evidence" value="ECO:0000304"/>
    <property type="project" value="Reactome"/>
</dbReference>
<dbReference type="GO" id="GO:0045202">
    <property type="term" value="C:synapse"/>
    <property type="evidence" value="ECO:0007669"/>
    <property type="project" value="GOC"/>
</dbReference>
<dbReference type="GO" id="GO:0007268">
    <property type="term" value="P:chemical synaptic transmission"/>
    <property type="evidence" value="ECO:0007669"/>
    <property type="project" value="Ensembl"/>
</dbReference>
<dbReference type="GO" id="GO:0021542">
    <property type="term" value="P:dentate gyrus development"/>
    <property type="evidence" value="ECO:0007669"/>
    <property type="project" value="Ensembl"/>
</dbReference>
<dbReference type="GO" id="GO:0010467">
    <property type="term" value="P:gene expression"/>
    <property type="evidence" value="ECO:0007669"/>
    <property type="project" value="Ensembl"/>
</dbReference>
<dbReference type="GO" id="GO:0042551">
    <property type="term" value="P:neuron maturation"/>
    <property type="evidence" value="ECO:0007669"/>
    <property type="project" value="Ensembl"/>
</dbReference>
<dbReference type="GO" id="GO:0001764">
    <property type="term" value="P:neuron migration"/>
    <property type="evidence" value="ECO:0007669"/>
    <property type="project" value="Ensembl"/>
</dbReference>
<dbReference type="CDD" id="cd22109">
    <property type="entry name" value="F-box_FBXO41"/>
    <property type="match status" value="1"/>
</dbReference>
<dbReference type="FunFam" id="3.80.10.10:FF:000229">
    <property type="entry name" value="F-box only protein 41"/>
    <property type="match status" value="1"/>
</dbReference>
<dbReference type="Gene3D" id="1.20.1280.50">
    <property type="match status" value="1"/>
</dbReference>
<dbReference type="Gene3D" id="3.80.10.10">
    <property type="entry name" value="Ribonuclease Inhibitor"/>
    <property type="match status" value="1"/>
</dbReference>
<dbReference type="InterPro" id="IPR036047">
    <property type="entry name" value="F-box-like_dom_sf"/>
</dbReference>
<dbReference type="InterPro" id="IPR001810">
    <property type="entry name" value="F-box_dom"/>
</dbReference>
<dbReference type="InterPro" id="IPR057038">
    <property type="entry name" value="FBX41/ZN365_Znf-C2H2"/>
</dbReference>
<dbReference type="InterPro" id="IPR052283">
    <property type="entry name" value="GenomicStab_NeuMorph_Reg"/>
</dbReference>
<dbReference type="InterPro" id="IPR032675">
    <property type="entry name" value="LRR_dom_sf"/>
</dbReference>
<dbReference type="PANTHER" id="PTHR15739:SF4">
    <property type="entry name" value="F-BOX ONLY PROTEIN 41"/>
    <property type="match status" value="1"/>
</dbReference>
<dbReference type="PANTHER" id="PTHR15739">
    <property type="entry name" value="ZINC FINGER PROTEIN"/>
    <property type="match status" value="1"/>
</dbReference>
<dbReference type="Pfam" id="PF12937">
    <property type="entry name" value="F-box-like"/>
    <property type="match status" value="1"/>
</dbReference>
<dbReference type="Pfam" id="PF23165">
    <property type="entry name" value="zf-C2H2_FBX41"/>
    <property type="match status" value="1"/>
</dbReference>
<dbReference type="SUPFAM" id="SSF81383">
    <property type="entry name" value="F-box domain"/>
    <property type="match status" value="1"/>
</dbReference>
<dbReference type="SUPFAM" id="SSF52047">
    <property type="entry name" value="RNI-like"/>
    <property type="match status" value="1"/>
</dbReference>
<gene>
    <name type="primary">FBXO41</name>
    <name type="synonym">FBX41</name>
    <name type="synonym">KIAA1940</name>
</gene>